<keyword id="KW-0024">Alternative initiation</keyword>
<keyword id="KW-0067">ATP-binding</keyword>
<keyword id="KW-0235">DNA replication</keyword>
<keyword id="KW-0238">DNA-binding</keyword>
<keyword id="KW-0255">Endonuclease</keyword>
<keyword id="KW-0291">Formylation</keyword>
<keyword id="KW-0378">Hydrolase</keyword>
<keyword id="KW-0436">Ligase</keyword>
<keyword id="KW-0540">Nuclease</keyword>
<keyword id="KW-0547">Nucleotide-binding</keyword>
<keyword id="KW-1185">Reference proteome</keyword>
<reference key="1">
    <citation type="journal article" date="1980" name="Gene">
        <title>Nucleotide sequence of the filamentous bacteriophage M13 DNA genome: comparison with phage fd.</title>
        <authorList>
            <person name="van Wezenbeek P.M.G.F."/>
            <person name="Hulsebos T.J.M."/>
            <person name="Schoenmakers J.G.G."/>
        </authorList>
    </citation>
    <scope>NUCLEOTIDE SEQUENCE [GENOMIC DNA]</scope>
</reference>
<comment type="function">
    <text evidence="1">Isoform G2P plays an essential role in viral DNA replication. Binds the origin of replication and cleaves the dsDNA replicative form I (RFI) and becomes covalently bound to it via phosphotyrosine bond, generating the dsDNA replicative form II (RFII). In turn, viral DNA replication initiates at the 3'-OH of the cleavage site. After one round of rolling circle synthesis, protein G2P is linked to the newly synthesized ssDNA and joins the ends of the displaced strand to generate a circular single-stranded molecule ready to be packed into a virion.</text>
</comment>
<comment type="function">
    <text evidence="1">Isoform G10P protein binds to double-stranded DNA and prevents hydrolysis by nucleases. Additionally, G10P is an inhibitor of DNA replication and may have a role in the transition from semiconservative replicative form DNA replication to single-stranded DNA synthesis in the life cycle.</text>
</comment>
<comment type="catalytic activity">
    <reaction>
        <text>ATP + (deoxyribonucleotide)n-3'-hydroxyl + 5'-phospho-(deoxyribonucleotide)m = (deoxyribonucleotide)n+m + AMP + diphosphate.</text>
        <dbReference type="EC" id="6.5.1.1"/>
    </reaction>
</comment>
<comment type="alternative products">
    <event type="alternative initiation"/>
    <isoform>
        <id>P69547-1</id>
        <name>G2P</name>
        <name>Gene 2 protein</name>
        <sequence type="displayed"/>
    </isoform>
    <isoform>
        <id>P69547-2</id>
        <name>G10P</name>
        <name>Gene 10 protein</name>
        <sequence type="described" ref="VSP_018671"/>
    </isoform>
</comment>
<comment type="miscellaneous">
    <molecule>Isoform G10P</molecule>
    <text evidence="2">N-formylation on Met-300.</text>
</comment>
<comment type="similarity">
    <text evidence="2">Belongs to the inovirus G2P protein family.</text>
</comment>
<gene>
    <name type="primary">II</name>
</gene>
<proteinExistence type="inferred from homology"/>
<evidence type="ECO:0000250" key="1"/>
<evidence type="ECO:0000305" key="2"/>
<sequence>MIDMLVLRLPFIDSLVCSRLSGNDLIAFVDLSKIATLSGMNLSARTVEYHIDGDLTVSGLSHPFESLPTHYSGIAFKIYEGSKNFYPCVEIKASPAKVLQGHNVFGTTDLALCSEALLLNFANSLPCLYDLLDVNATTISRIDATFSARAPNENIAKQVIDHLRNVSNGQTKSTRSQNWESTVTWNETSRHRTLVAYLKHVELQHQIQQLSSKPSAKMTSYQKEQLKVLSNPDLLEFASGLVRFEARIKTRYLKSFGLPLNLFDAIRFASDYNSQGKDLIFDLWSFSFSELFKAFEGDSMNIYDDSAVLDAIQSKHFTITPSGKTSFAKASRYFGFYRRLVNEGYDSVALTMPRNSFWRYVSALVECGIPKSQLMNLSTCNNVVPLVRFINVDFSSQRPDWYNEPVLKIA</sequence>
<accession>P69547</accession>
<accession>P03659</accession>
<name>REP_BPM13</name>
<dbReference type="EC" id="3.1.21.-"/>
<dbReference type="EC" id="6.5.1.1"/>
<dbReference type="EMBL" id="V00604">
    <property type="protein sequence ID" value="CAA23856.1"/>
    <property type="molecule type" value="Genomic_DNA"/>
</dbReference>
<dbReference type="EMBL" id="V00604">
    <property type="protein sequence ID" value="CAA23857.1"/>
    <property type="molecule type" value="Genomic_DNA"/>
</dbReference>
<dbReference type="PIR" id="B04264">
    <property type="entry name" value="Z2BPM3"/>
</dbReference>
<dbReference type="RefSeq" id="NP_510885.1">
    <molecule id="P69547-1"/>
    <property type="nucleotide sequence ID" value="NC_003287.2"/>
</dbReference>
<dbReference type="GeneID" id="927328"/>
<dbReference type="KEGG" id="vg:927328"/>
<dbReference type="KEGG" id="vg:927329"/>
<dbReference type="OrthoDB" id="29900at10239"/>
<dbReference type="Proteomes" id="UP000002111">
    <property type="component" value="Genome"/>
</dbReference>
<dbReference type="GO" id="GO:0005524">
    <property type="term" value="F:ATP binding"/>
    <property type="evidence" value="ECO:0007669"/>
    <property type="project" value="UniProtKB-KW"/>
</dbReference>
<dbReference type="GO" id="GO:0003677">
    <property type="term" value="F:DNA binding"/>
    <property type="evidence" value="ECO:0007669"/>
    <property type="project" value="UniProtKB-KW"/>
</dbReference>
<dbReference type="GO" id="GO:0003910">
    <property type="term" value="F:DNA ligase (ATP) activity"/>
    <property type="evidence" value="ECO:0007669"/>
    <property type="project" value="UniProtKB-EC"/>
</dbReference>
<dbReference type="GO" id="GO:0004519">
    <property type="term" value="F:endonuclease activity"/>
    <property type="evidence" value="ECO:0007669"/>
    <property type="project" value="UniProtKB-KW"/>
</dbReference>
<dbReference type="GO" id="GO:0006260">
    <property type="term" value="P:DNA replication"/>
    <property type="evidence" value="ECO:0007669"/>
    <property type="project" value="UniProtKB-KW"/>
</dbReference>
<dbReference type="GO" id="GO:0039684">
    <property type="term" value="P:rolling circle single-stranded viral DNA replication"/>
    <property type="evidence" value="ECO:0000314"/>
    <property type="project" value="UniProtKB"/>
</dbReference>
<dbReference type="InterPro" id="IPR006516">
    <property type="entry name" value="G2P"/>
</dbReference>
<dbReference type="InterPro" id="IPR022688">
    <property type="entry name" value="G2P_C"/>
</dbReference>
<dbReference type="InterPro" id="IPR022686">
    <property type="entry name" value="G2P_N"/>
</dbReference>
<dbReference type="NCBIfam" id="TIGR01629">
    <property type="entry name" value="rep_II_X"/>
    <property type="match status" value="1"/>
</dbReference>
<dbReference type="Pfam" id="PF05155">
    <property type="entry name" value="G2P_X_C"/>
    <property type="match status" value="1"/>
</dbReference>
<dbReference type="Pfam" id="PF05144">
    <property type="entry name" value="Phage_CRI"/>
    <property type="match status" value="1"/>
</dbReference>
<feature type="chain" id="PRO_0000003307" description="Replication-associated protein G2P">
    <location>
        <begin position="1"/>
        <end position="410"/>
    </location>
</feature>
<feature type="splice variant" id="VSP_018671" description="In isoform G10P." evidence="2">
    <location>
        <begin position="1"/>
        <end position="299"/>
    </location>
</feature>
<protein>
    <recommendedName>
        <fullName>Replication-associated protein G2P</fullName>
        <shortName>Rep</shortName>
        <ecNumber>3.1.21.-</ecNumber>
        <ecNumber>6.5.1.1</ecNumber>
    </recommendedName>
    <alternativeName>
        <fullName>G2P</fullName>
    </alternativeName>
    <alternativeName>
        <fullName>Gene 2 protein</fullName>
    </alternativeName>
</protein>
<organism>
    <name type="scientific">Enterobacteria phage M13</name>
    <name type="common">Bacteriophage M13</name>
    <dbReference type="NCBI Taxonomy" id="1977402"/>
    <lineage>
        <taxon>Viruses</taxon>
        <taxon>Monodnaviria</taxon>
        <taxon>Loebvirae</taxon>
        <taxon>Hofneiviricota</taxon>
        <taxon>Faserviricetes</taxon>
        <taxon>Tubulavirales</taxon>
        <taxon>Inoviridae</taxon>
        <taxon>Inovirus</taxon>
    </lineage>
</organism>
<organismHost>
    <name type="scientific">Escherichia coli</name>
    <dbReference type="NCBI Taxonomy" id="562"/>
</organismHost>